<name>HIS3_CUPTR</name>
<comment type="function">
    <text evidence="1">Catalyzes the hydrolysis of the adenine ring of phosphoribosyl-AMP.</text>
</comment>
<comment type="catalytic activity">
    <reaction evidence="1">
        <text>1-(5-phospho-beta-D-ribosyl)-5'-AMP + H2O = 1-(5-phospho-beta-D-ribosyl)-5-[(5-phospho-beta-D-ribosylamino)methylideneamino]imidazole-4-carboxamide</text>
        <dbReference type="Rhea" id="RHEA:20049"/>
        <dbReference type="ChEBI" id="CHEBI:15377"/>
        <dbReference type="ChEBI" id="CHEBI:58435"/>
        <dbReference type="ChEBI" id="CHEBI:59457"/>
        <dbReference type="EC" id="3.5.4.19"/>
    </reaction>
</comment>
<comment type="cofactor">
    <cofactor evidence="1">
        <name>Mg(2+)</name>
        <dbReference type="ChEBI" id="CHEBI:18420"/>
    </cofactor>
    <text evidence="1">Binds 1 Mg(2+) ion per subunit.</text>
</comment>
<comment type="cofactor">
    <cofactor evidence="1">
        <name>Zn(2+)</name>
        <dbReference type="ChEBI" id="CHEBI:29105"/>
    </cofactor>
    <text evidence="1">Binds 1 zinc ion per subunit.</text>
</comment>
<comment type="pathway">
    <text evidence="1">Amino-acid biosynthesis; L-histidine biosynthesis; L-histidine from 5-phospho-alpha-D-ribose 1-diphosphate: step 3/9.</text>
</comment>
<comment type="subunit">
    <text evidence="1">Homodimer.</text>
</comment>
<comment type="subcellular location">
    <subcellularLocation>
        <location evidence="1">Cytoplasm</location>
    </subcellularLocation>
</comment>
<comment type="similarity">
    <text evidence="1">Belongs to the PRA-CH family.</text>
</comment>
<sequence length="134" mass="15369">MAKKWLNKVKWDDNGLVPVIVQEAGSNDVLMFAFMNRDALLRTVELGEAVFWSRSRKRLWHKGEESGHVQKVHEIRLDCDEDVVLLKVTQVDSIACHTGRHSCFFQKFDGDADTGDWQTVEPVLKDPAQIYTKP</sequence>
<keyword id="KW-0028">Amino-acid biosynthesis</keyword>
<keyword id="KW-0963">Cytoplasm</keyword>
<keyword id="KW-0368">Histidine biosynthesis</keyword>
<keyword id="KW-0378">Hydrolase</keyword>
<keyword id="KW-0460">Magnesium</keyword>
<keyword id="KW-0479">Metal-binding</keyword>
<keyword id="KW-0862">Zinc</keyword>
<accession>B3R793</accession>
<gene>
    <name evidence="1" type="primary">hisI</name>
    <name type="ordered locus">RALTA_A2868</name>
</gene>
<protein>
    <recommendedName>
        <fullName evidence="1">Phosphoribosyl-AMP cyclohydrolase</fullName>
        <shortName evidence="1">PRA-CH</shortName>
        <ecNumber evidence="1">3.5.4.19</ecNumber>
    </recommendedName>
</protein>
<organism>
    <name type="scientific">Cupriavidus taiwanensis (strain DSM 17343 / BCRC 17206 / CCUG 44338 / CIP 107171 / LMG 19424 / R1)</name>
    <name type="common">Ralstonia taiwanensis (strain LMG 19424)</name>
    <dbReference type="NCBI Taxonomy" id="977880"/>
    <lineage>
        <taxon>Bacteria</taxon>
        <taxon>Pseudomonadati</taxon>
        <taxon>Pseudomonadota</taxon>
        <taxon>Betaproteobacteria</taxon>
        <taxon>Burkholderiales</taxon>
        <taxon>Burkholderiaceae</taxon>
        <taxon>Cupriavidus</taxon>
    </lineage>
</organism>
<dbReference type="EC" id="3.5.4.19" evidence="1"/>
<dbReference type="EMBL" id="CU633749">
    <property type="protein sequence ID" value="CAQ70793.1"/>
    <property type="molecule type" value="Genomic_DNA"/>
</dbReference>
<dbReference type="RefSeq" id="WP_012354085.1">
    <property type="nucleotide sequence ID" value="NC_010528.1"/>
</dbReference>
<dbReference type="SMR" id="B3R793"/>
<dbReference type="GeneID" id="29761219"/>
<dbReference type="KEGG" id="cti:RALTA_A2868"/>
<dbReference type="eggNOG" id="COG0139">
    <property type="taxonomic scope" value="Bacteria"/>
</dbReference>
<dbReference type="HOGENOM" id="CLU_048577_5_0_4"/>
<dbReference type="BioCyc" id="CTAI977880:RALTA_RS13975-MONOMER"/>
<dbReference type="UniPathway" id="UPA00031">
    <property type="reaction ID" value="UER00008"/>
</dbReference>
<dbReference type="Proteomes" id="UP000001692">
    <property type="component" value="Chromosome 1"/>
</dbReference>
<dbReference type="GO" id="GO:0005737">
    <property type="term" value="C:cytoplasm"/>
    <property type="evidence" value="ECO:0007669"/>
    <property type="project" value="UniProtKB-SubCell"/>
</dbReference>
<dbReference type="GO" id="GO:0000287">
    <property type="term" value="F:magnesium ion binding"/>
    <property type="evidence" value="ECO:0007669"/>
    <property type="project" value="UniProtKB-UniRule"/>
</dbReference>
<dbReference type="GO" id="GO:0004635">
    <property type="term" value="F:phosphoribosyl-AMP cyclohydrolase activity"/>
    <property type="evidence" value="ECO:0007669"/>
    <property type="project" value="UniProtKB-UniRule"/>
</dbReference>
<dbReference type="GO" id="GO:0008270">
    <property type="term" value="F:zinc ion binding"/>
    <property type="evidence" value="ECO:0007669"/>
    <property type="project" value="UniProtKB-UniRule"/>
</dbReference>
<dbReference type="GO" id="GO:0000105">
    <property type="term" value="P:L-histidine biosynthetic process"/>
    <property type="evidence" value="ECO:0007669"/>
    <property type="project" value="UniProtKB-UniRule"/>
</dbReference>
<dbReference type="FunFam" id="3.10.20.810:FF:000001">
    <property type="entry name" value="Histidine biosynthesis bifunctional protein HisIE"/>
    <property type="match status" value="1"/>
</dbReference>
<dbReference type="Gene3D" id="3.10.20.810">
    <property type="entry name" value="Phosphoribosyl-AMP cyclohydrolase"/>
    <property type="match status" value="1"/>
</dbReference>
<dbReference type="HAMAP" id="MF_01021">
    <property type="entry name" value="HisI"/>
    <property type="match status" value="1"/>
</dbReference>
<dbReference type="InterPro" id="IPR026660">
    <property type="entry name" value="PRA-CH"/>
</dbReference>
<dbReference type="InterPro" id="IPR002496">
    <property type="entry name" value="PRib_AMP_CycHydrolase_dom"/>
</dbReference>
<dbReference type="InterPro" id="IPR038019">
    <property type="entry name" value="PRib_AMP_CycHydrolase_sf"/>
</dbReference>
<dbReference type="NCBIfam" id="NF000768">
    <property type="entry name" value="PRK00051.1"/>
    <property type="match status" value="1"/>
</dbReference>
<dbReference type="PANTHER" id="PTHR42945">
    <property type="entry name" value="HISTIDINE BIOSYNTHESIS BIFUNCTIONAL PROTEIN"/>
    <property type="match status" value="1"/>
</dbReference>
<dbReference type="PANTHER" id="PTHR42945:SF1">
    <property type="entry name" value="HISTIDINE BIOSYNTHESIS BIFUNCTIONAL PROTEIN HIS7"/>
    <property type="match status" value="1"/>
</dbReference>
<dbReference type="Pfam" id="PF01502">
    <property type="entry name" value="PRA-CH"/>
    <property type="match status" value="1"/>
</dbReference>
<dbReference type="SUPFAM" id="SSF141734">
    <property type="entry name" value="HisI-like"/>
    <property type="match status" value="1"/>
</dbReference>
<feature type="chain" id="PRO_1000135347" description="Phosphoribosyl-AMP cyclohydrolase">
    <location>
        <begin position="1"/>
        <end position="134"/>
    </location>
</feature>
<feature type="binding site" evidence="1">
    <location>
        <position position="78"/>
    </location>
    <ligand>
        <name>Mg(2+)</name>
        <dbReference type="ChEBI" id="CHEBI:18420"/>
    </ligand>
</feature>
<feature type="binding site" evidence="1">
    <location>
        <position position="79"/>
    </location>
    <ligand>
        <name>Zn(2+)</name>
        <dbReference type="ChEBI" id="CHEBI:29105"/>
        <note>ligand shared between dimeric partners</note>
    </ligand>
</feature>
<feature type="binding site" evidence="1">
    <location>
        <position position="80"/>
    </location>
    <ligand>
        <name>Mg(2+)</name>
        <dbReference type="ChEBI" id="CHEBI:18420"/>
    </ligand>
</feature>
<feature type="binding site" evidence="1">
    <location>
        <position position="82"/>
    </location>
    <ligand>
        <name>Mg(2+)</name>
        <dbReference type="ChEBI" id="CHEBI:18420"/>
    </ligand>
</feature>
<feature type="binding site" evidence="1">
    <location>
        <position position="96"/>
    </location>
    <ligand>
        <name>Zn(2+)</name>
        <dbReference type="ChEBI" id="CHEBI:29105"/>
        <note>ligand shared between dimeric partners</note>
    </ligand>
</feature>
<feature type="binding site" evidence="1">
    <location>
        <position position="103"/>
    </location>
    <ligand>
        <name>Zn(2+)</name>
        <dbReference type="ChEBI" id="CHEBI:29105"/>
        <note>ligand shared between dimeric partners</note>
    </ligand>
</feature>
<proteinExistence type="inferred from homology"/>
<evidence type="ECO:0000255" key="1">
    <source>
        <dbReference type="HAMAP-Rule" id="MF_01021"/>
    </source>
</evidence>
<reference key="1">
    <citation type="journal article" date="2008" name="Genome Res.">
        <title>Genome sequence of the beta-rhizobium Cupriavidus taiwanensis and comparative genomics of rhizobia.</title>
        <authorList>
            <person name="Amadou C."/>
            <person name="Pascal G."/>
            <person name="Mangenot S."/>
            <person name="Glew M."/>
            <person name="Bontemps C."/>
            <person name="Capela D."/>
            <person name="Carrere S."/>
            <person name="Cruveiller S."/>
            <person name="Dossat C."/>
            <person name="Lajus A."/>
            <person name="Marchetti M."/>
            <person name="Poinsot V."/>
            <person name="Rouy Z."/>
            <person name="Servin B."/>
            <person name="Saad M."/>
            <person name="Schenowitz C."/>
            <person name="Barbe V."/>
            <person name="Batut J."/>
            <person name="Medigue C."/>
            <person name="Masson-Boivin C."/>
        </authorList>
    </citation>
    <scope>NUCLEOTIDE SEQUENCE [LARGE SCALE GENOMIC DNA]</scope>
    <source>
        <strain>DSM 17343 / BCRC 17206 / CCUG 44338 / CIP 107171 / LMG 19424 / R1</strain>
    </source>
</reference>